<name>CYSJ_ECOLI</name>
<gene>
    <name evidence="1" type="primary">cysJ</name>
    <name type="ordered locus">b2764</name>
    <name type="ordered locus">JW2734</name>
</gene>
<protein>
    <recommendedName>
        <fullName evidence="1">Sulfite reductase [NADPH] flavoprotein alpha-component</fullName>
        <shortName evidence="1">SiR-FP</shortName>
        <ecNumber evidence="1 2">1.8.1.2</ecNumber>
    </recommendedName>
</protein>
<keyword id="KW-0002">3D-structure</keyword>
<keyword id="KW-0028">Amino-acid biosynthesis</keyword>
<keyword id="KW-0198">Cysteine biosynthesis</keyword>
<keyword id="KW-0903">Direct protein sequencing</keyword>
<keyword id="KW-0249">Electron transport</keyword>
<keyword id="KW-0274">FAD</keyword>
<keyword id="KW-0285">Flavoprotein</keyword>
<keyword id="KW-0288">FMN</keyword>
<keyword id="KW-0521">NADP</keyword>
<keyword id="KW-0560">Oxidoreductase</keyword>
<keyword id="KW-1185">Reference proteome</keyword>
<keyword id="KW-0813">Transport</keyword>
<feature type="initiator methionine" description="Removed">
    <location>
        <position position="1"/>
    </location>
</feature>
<feature type="chain" id="PRO_0000199923" description="Sulfite reductase [NADPH] flavoprotein alpha-component">
    <location>
        <begin position="2"/>
        <end position="599"/>
    </location>
</feature>
<feature type="domain" description="Flavodoxin-like" evidence="1">
    <location>
        <begin position="64"/>
        <end position="202"/>
    </location>
</feature>
<feature type="domain" description="FAD-binding FR-type" evidence="1">
    <location>
        <begin position="234"/>
        <end position="448"/>
    </location>
</feature>
<feature type="binding site" evidence="1 4">
    <location>
        <begin position="70"/>
        <end position="75"/>
    </location>
    <ligand>
        <name>FMN</name>
        <dbReference type="ChEBI" id="CHEBI:58210"/>
    </ligand>
</feature>
<feature type="binding site" evidence="1 4">
    <location>
        <begin position="117"/>
        <end position="120"/>
    </location>
    <ligand>
        <name>FMN</name>
        <dbReference type="ChEBI" id="CHEBI:58210"/>
    </ligand>
</feature>
<feature type="binding site" evidence="1 4">
    <location>
        <begin position="153"/>
        <end position="162"/>
    </location>
    <ligand>
        <name>FMN</name>
        <dbReference type="ChEBI" id="CHEBI:58210"/>
    </ligand>
</feature>
<feature type="binding site" evidence="1 2">
    <location>
        <position position="322"/>
    </location>
    <ligand>
        <name>FAD</name>
        <dbReference type="ChEBI" id="CHEBI:57692"/>
    </ligand>
</feature>
<feature type="binding site" evidence="1 2">
    <location>
        <position position="356"/>
    </location>
    <ligand>
        <name>FAD</name>
        <dbReference type="ChEBI" id="CHEBI:57692"/>
    </ligand>
</feature>
<feature type="binding site" evidence="1 2">
    <location>
        <begin position="386"/>
        <end position="389"/>
    </location>
    <ligand>
        <name>FAD</name>
        <dbReference type="ChEBI" id="CHEBI:57692"/>
    </ligand>
</feature>
<feature type="binding site" evidence="1 2">
    <location>
        <begin position="404"/>
        <end position="406"/>
    </location>
    <ligand>
        <name>FAD</name>
        <dbReference type="ChEBI" id="CHEBI:57692"/>
    </ligand>
</feature>
<feature type="binding site" evidence="1 2">
    <location>
        <position position="410"/>
    </location>
    <ligand>
        <name>FAD</name>
        <dbReference type="ChEBI" id="CHEBI:57692"/>
    </ligand>
</feature>
<feature type="binding site" evidence="1 2">
    <location>
        <begin position="419"/>
        <end position="422"/>
    </location>
    <ligand>
        <name>FAD</name>
        <dbReference type="ChEBI" id="CHEBI:57692"/>
    </ligand>
</feature>
<feature type="binding site" evidence="1 2">
    <location>
        <begin position="519"/>
        <end position="520"/>
    </location>
    <ligand>
        <name>NADP(+)</name>
        <dbReference type="ChEBI" id="CHEBI:58349"/>
    </ligand>
</feature>
<feature type="binding site" evidence="1 2">
    <location>
        <begin position="525"/>
        <end position="529"/>
    </location>
    <ligand>
        <name>NADP(+)</name>
        <dbReference type="ChEBI" id="CHEBI:58349"/>
    </ligand>
</feature>
<feature type="binding site" evidence="1 2">
    <location>
        <position position="561"/>
    </location>
    <ligand>
        <name>NADP(+)</name>
        <dbReference type="ChEBI" id="CHEBI:58349"/>
    </ligand>
</feature>
<feature type="binding site" evidence="1 2">
    <location>
        <position position="599"/>
    </location>
    <ligand>
        <name>FAD</name>
        <dbReference type="ChEBI" id="CHEBI:57692"/>
    </ligand>
</feature>
<feature type="sequence conflict" description="In Ref. 1; AAA23650." evidence="5" ref="1">
    <original>S</original>
    <variation>T</variation>
    <location>
        <position position="156"/>
    </location>
</feature>
<feature type="sequence conflict" description="In Ref. 1; AAA23650." evidence="5" ref="1">
    <original>M</original>
    <variation>L</variation>
    <location>
        <position position="268"/>
    </location>
</feature>
<feature type="sequence conflict" description="In Ref. 1; AAA23650." evidence="5" ref="1">
    <original>D</original>
    <variation>E</variation>
    <location>
        <position position="508"/>
    </location>
</feature>
<feature type="strand" evidence="8">
    <location>
        <begin position="65"/>
        <end position="69"/>
    </location>
</feature>
<feature type="strand" evidence="8">
    <location>
        <begin position="71"/>
        <end position="73"/>
    </location>
</feature>
<feature type="helix" evidence="8">
    <location>
        <begin position="74"/>
        <end position="89"/>
    </location>
</feature>
<feature type="strand" evidence="8">
    <location>
        <begin position="94"/>
        <end position="97"/>
    </location>
</feature>
<feature type="helix" evidence="8">
    <location>
        <begin position="98"/>
        <end position="100"/>
    </location>
</feature>
<feature type="helix" evidence="8">
    <location>
        <begin position="103"/>
        <end position="108"/>
    </location>
</feature>
<feature type="strand" evidence="8">
    <location>
        <begin position="110"/>
        <end position="117"/>
    </location>
</feature>
<feature type="helix" evidence="8">
    <location>
        <begin position="120"/>
        <end position="122"/>
    </location>
</feature>
<feature type="helix" evidence="8">
    <location>
        <begin position="126"/>
        <end position="128"/>
    </location>
</feature>
<feature type="helix" evidence="8">
    <location>
        <begin position="129"/>
        <end position="135"/>
    </location>
</feature>
<feature type="strand" evidence="8">
    <location>
        <begin position="147"/>
        <end position="153"/>
    </location>
</feature>
<feature type="strand" evidence="8">
    <location>
        <begin position="158"/>
        <end position="160"/>
    </location>
</feature>
<feature type="helix" evidence="8">
    <location>
        <begin position="163"/>
        <end position="175"/>
    </location>
</feature>
<feature type="strand" evidence="8">
    <location>
        <begin position="178"/>
        <end position="181"/>
    </location>
</feature>
<feature type="strand" evidence="8">
    <location>
        <begin position="184"/>
        <end position="186"/>
    </location>
</feature>
<feature type="helix" evidence="8">
    <location>
        <begin position="191"/>
        <end position="206"/>
    </location>
</feature>
<feature type="strand" evidence="7">
    <location>
        <begin position="233"/>
        <end position="235"/>
    </location>
</feature>
<feature type="strand" evidence="6">
    <location>
        <begin position="237"/>
        <end position="246"/>
    </location>
</feature>
<feature type="strand" evidence="6">
    <location>
        <begin position="253"/>
        <end position="262"/>
    </location>
</feature>
<feature type="strand" evidence="6">
    <location>
        <begin position="275"/>
        <end position="278"/>
    </location>
</feature>
<feature type="helix" evidence="6">
    <location>
        <begin position="284"/>
        <end position="293"/>
    </location>
</feature>
<feature type="strand" evidence="6">
    <location>
        <begin position="300"/>
        <end position="304"/>
    </location>
</feature>
<feature type="strand" evidence="6">
    <location>
        <begin position="307"/>
        <end position="310"/>
    </location>
</feature>
<feature type="helix" evidence="6">
    <location>
        <begin position="311"/>
        <end position="318"/>
    </location>
</feature>
<feature type="helix" evidence="6">
    <location>
        <begin position="326"/>
        <end position="336"/>
    </location>
</feature>
<feature type="turn" evidence="6">
    <location>
        <begin position="339"/>
        <end position="341"/>
    </location>
</feature>
<feature type="helix" evidence="6">
    <location>
        <begin position="342"/>
        <end position="344"/>
    </location>
</feature>
<feature type="helix" evidence="6">
    <location>
        <begin position="349"/>
        <end position="357"/>
    </location>
</feature>
<feature type="helix" evidence="6">
    <location>
        <begin position="360"/>
        <end position="366"/>
    </location>
</feature>
<feature type="helix" evidence="6">
    <location>
        <begin position="373"/>
        <end position="379"/>
    </location>
</feature>
<feature type="strand" evidence="6">
    <location>
        <begin position="386"/>
        <end position="390"/>
    </location>
</feature>
<feature type="turn" evidence="6">
    <location>
        <begin position="394"/>
        <end position="396"/>
    </location>
</feature>
<feature type="strand" evidence="6">
    <location>
        <begin position="399"/>
        <end position="407"/>
    </location>
</feature>
<feature type="strand" evidence="6">
    <location>
        <begin position="409"/>
        <end position="412"/>
    </location>
</feature>
<feature type="strand" evidence="6">
    <location>
        <begin position="415"/>
        <end position="418"/>
    </location>
</feature>
<feature type="helix" evidence="6">
    <location>
        <begin position="420"/>
        <end position="427"/>
    </location>
</feature>
<feature type="strand" evidence="6">
    <location>
        <begin position="434"/>
        <end position="440"/>
    </location>
</feature>
<feature type="strand" evidence="6">
    <location>
        <begin position="455"/>
        <end position="458"/>
    </location>
</feature>
<feature type="helix" evidence="6">
    <location>
        <begin position="461"/>
        <end position="464"/>
    </location>
</feature>
<feature type="helix" evidence="6">
    <location>
        <begin position="465"/>
        <end position="477"/>
    </location>
</feature>
<feature type="strand" evidence="6">
    <location>
        <begin position="483"/>
        <end position="490"/>
    </location>
</feature>
<feature type="helix" evidence="6">
    <location>
        <begin position="492"/>
        <end position="495"/>
    </location>
</feature>
<feature type="helix" evidence="6">
    <location>
        <begin position="499"/>
        <end position="507"/>
    </location>
</feature>
<feature type="strand" evidence="6">
    <location>
        <begin position="513"/>
        <end position="518"/>
    </location>
</feature>
<feature type="strand" evidence="6">
    <location>
        <begin position="521"/>
        <end position="524"/>
    </location>
</feature>
<feature type="helix" evidence="6">
    <location>
        <begin position="528"/>
        <end position="534"/>
    </location>
</feature>
<feature type="helix" evidence="6">
    <location>
        <begin position="536"/>
        <end position="544"/>
    </location>
</feature>
<feature type="strand" evidence="6">
    <location>
        <begin position="548"/>
        <end position="554"/>
    </location>
</feature>
<feature type="turn" evidence="6">
    <location>
        <begin position="555"/>
        <end position="557"/>
    </location>
</feature>
<feature type="helix" evidence="6">
    <location>
        <begin position="558"/>
        <end position="572"/>
    </location>
</feature>
<feature type="turn" evidence="6">
    <location>
        <begin position="573"/>
        <end position="575"/>
    </location>
</feature>
<feature type="helix" evidence="6">
    <location>
        <begin position="578"/>
        <end position="590"/>
    </location>
</feature>
<feature type="strand" evidence="6">
    <location>
        <begin position="594"/>
        <end position="599"/>
    </location>
</feature>
<reference key="1">
    <citation type="journal article" date="1989" name="J. Biol. Chem.">
        <title>Characterization of the flavoprotein moieties of NADPH-sulfite reductase from Salmonella typhimurium and Escherichia coli. Physicochemical and catalytic properties, amino acid sequence deduced from DNA sequence of cysJ, and comparison with NADPH-cytochrome P-450 reductase.</title>
        <authorList>
            <person name="Ostrowski J."/>
            <person name="Barber M.J."/>
            <person name="Rueger D.C."/>
            <person name="Miller B.E."/>
            <person name="Siegel L.M."/>
            <person name="Kredich N.M."/>
        </authorList>
    </citation>
    <scope>NUCLEOTIDE SEQUENCE [GENOMIC DNA]</scope>
    <source>
        <strain>B</strain>
    </source>
</reference>
<reference key="2">
    <citation type="journal article" date="1997" name="Science">
        <title>The complete genome sequence of Escherichia coli K-12.</title>
        <authorList>
            <person name="Blattner F.R."/>
            <person name="Plunkett G. III"/>
            <person name="Bloch C.A."/>
            <person name="Perna N.T."/>
            <person name="Burland V."/>
            <person name="Riley M."/>
            <person name="Collado-Vides J."/>
            <person name="Glasner J.D."/>
            <person name="Rode C.K."/>
            <person name="Mayhew G.F."/>
            <person name="Gregor J."/>
            <person name="Davis N.W."/>
            <person name="Kirkpatrick H.A."/>
            <person name="Goeden M.A."/>
            <person name="Rose D.J."/>
            <person name="Mau B."/>
            <person name="Shao Y."/>
        </authorList>
    </citation>
    <scope>NUCLEOTIDE SEQUENCE [LARGE SCALE GENOMIC DNA]</scope>
    <source>
        <strain>K12 / MG1655 / ATCC 47076</strain>
    </source>
</reference>
<reference key="3">
    <citation type="journal article" date="2006" name="Mol. Syst. Biol.">
        <title>Highly accurate genome sequences of Escherichia coli K-12 strains MG1655 and W3110.</title>
        <authorList>
            <person name="Hayashi K."/>
            <person name="Morooka N."/>
            <person name="Yamamoto Y."/>
            <person name="Fujita K."/>
            <person name="Isono K."/>
            <person name="Choi S."/>
            <person name="Ohtsubo E."/>
            <person name="Baba T."/>
            <person name="Wanner B.L."/>
            <person name="Mori H."/>
            <person name="Horiuchi T."/>
        </authorList>
    </citation>
    <scope>NUCLEOTIDE SEQUENCE [LARGE SCALE GENOMIC DNA]</scope>
    <source>
        <strain>K12 / W3110 / ATCC 27325 / DSM 5911</strain>
    </source>
</reference>
<reference key="4">
    <citation type="journal article" date="1989" name="J. Biol. Chem.">
        <title>Characterization of the cysJIH regions of Salmonella typhimurium and Escherichia coli B. DNA sequences of cysI and cysH and a model for the siroheme-Fe4S4 active center of sulfite reductase hemoprotein based on amino acid homology with spinach nitrite reductase.</title>
        <authorList>
            <person name="Ostrowski J."/>
            <person name="Wu J.-Y."/>
            <person name="Rueger D.C."/>
            <person name="Miller B.E."/>
            <person name="Siegel L.M."/>
            <person name="Kredich N.M."/>
        </authorList>
    </citation>
    <scope>NUCLEOTIDE SEQUENCE [GENOMIC DNA] OF 594-599</scope>
    <source>
        <strain>B</strain>
    </source>
</reference>
<reference key="5">
    <citation type="journal article" date="1995" name="FEBS Lett.">
        <title>NADPH-sulfite reductase flavoprotein from Escherichia coli: contribution to the flavin content and subunit interaction.</title>
        <authorList>
            <person name="Eschenbrenner M."/>
            <person name="Coves J."/>
            <person name="Fontecave M."/>
        </authorList>
    </citation>
    <scope>CHARACTERIZATION OF FAD AND FMN DOMAINS</scope>
</reference>
<reference key="6">
    <citation type="journal article" date="1995" name="J. Biol. Chem.">
        <title>The flavin reductase activity of the flavoprotein component of sulfite reductase from Escherichia coli. A new model for the protein structure.</title>
        <authorList>
            <person name="Eschenbrenner M."/>
            <person name="Coves J."/>
            <person name="Fontecave M."/>
        </authorList>
    </citation>
    <scope>CHARACTERIZATION AS A NADPH:FLAVIN OXIDOREDUCTASE</scope>
</reference>
<reference key="7">
    <citation type="journal article" date="1997" name="Biochemistry">
        <title>Flavin mononucleotide-binding domain of the flavoprotein component of the sulfite reductase from Escherichia coli.</title>
        <authorList>
            <person name="Coves J."/>
            <person name="Zeghouf M."/>
            <person name="Macherel D."/>
            <person name="Guigliarelli B."/>
            <person name="Asso M."/>
            <person name="Fontecave M."/>
        </authorList>
    </citation>
    <scope>CHARACTERIZATION OF FMN DOMAIN 1-220</scope>
</reference>
<reference key="8">
    <citation type="journal article" date="1998" name="Biochem. Biophys. Res. Commun.">
        <title>The flavoprotein component of the Escherichia coli sulfite reductase can act as a cytochrome P450c17 reductase.</title>
        <authorList>
            <person name="Zeghouf M."/>
            <person name="Defaye G."/>
            <person name="Fontecave M."/>
            <person name="Coves J."/>
        </authorList>
    </citation>
    <scope>CHARACTERIZATION AS A NADPH-CYTOCHROME P450 REDUCTASE</scope>
</reference>
<reference key="9">
    <citation type="journal article" date="1998" name="Biochemistry">
        <title>The flavoprotein component of the Escherichia coli sulfite reductase: expression, purification, and spectral and catalytic properties of a monomeric form containing both the flavin adenine dinucleotide and the flavin mononucleotide cofactors.</title>
        <authorList>
            <person name="Zeghouf M."/>
            <person name="Fontecave M."/>
            <person name="Macherel D."/>
            <person name="Coves J."/>
        </authorList>
    </citation>
    <scope>CHARACTERIZATION</scope>
</reference>
<reference key="10">
    <citation type="journal article" date="1999" name="Biochem. J.">
        <title>Overexpression of the FAD-binding domain of the sulphite reductase flavoprotein component from Escherichia coli and its inhibition by iodonium diphenyl chloride.</title>
        <authorList>
            <person name="Coves J."/>
            <person name="Lebrun C."/>
            <person name="Gervasi G."/>
            <person name="Dalbon P."/>
            <person name="Fontecave M."/>
        </authorList>
    </citation>
    <scope>CHARACTERIZATION OF FAD DOMAIN</scope>
</reference>
<reference key="11">
    <citation type="journal article" date="2002" name="Biochemistry">
        <title>Reactivity, secondary structure, and molecular topology of the Escherichia coli sulfite reductase flavodoxin-like domain.</title>
        <authorList>
            <person name="Champier L."/>
            <person name="Sibille N."/>
            <person name="Bersch B."/>
            <person name="Brutscher B."/>
            <person name="Blackledge M."/>
            <person name="Coves J."/>
        </authorList>
    </citation>
    <scope>CHARACTERIZATION</scope>
    <scope>STRUCTURE BY NMR OF 53-220</scope>
</reference>
<reference key="12">
    <citation type="journal article" date="2000" name="J. Biol. Chem.">
        <title>A simplified functional version of the Escherichia coli sulfite reductase.</title>
        <authorList>
            <person name="Zeghouf M."/>
            <person name="Fontecave M."/>
            <person name="Coves J."/>
        </authorList>
    </citation>
    <scope>QUATERNARY STRUCTURE</scope>
</reference>
<reference key="13">
    <citation type="journal article" date="2000" name="J. Mol. Biol.">
        <title>Four crystal structures of the 60 kDa flavoprotein monomer of the sulfite reductase indicate a disordered flavodoxin-like module.</title>
        <authorList>
            <person name="Gruez A."/>
            <person name="Pignol D."/>
            <person name="Zeghouf M."/>
            <person name="Coves J."/>
            <person name="Fontecave M."/>
            <person name="Ferrer J.-L."/>
            <person name="Fontecilla-Camps J.-C."/>
        </authorList>
    </citation>
    <scope>X-RAY CRYSTALLOGRAPHY (2.01 ANGSTROMS) OF 226-599 IN COMPLEXES WITH FAD AND NADP</scope>
    <scope>COFACTOR</scope>
    <scope>IDENTIFICATION BY MASS SPECTROMETRY</scope>
    <scope>PARTIAL PROTEIN SEQUENCE</scope>
    <scope>CATALYTIC ACTIVITY</scope>
</reference>
<reference key="14">
    <citation type="journal article" date="2005" name="Biochemistry">
        <title>Solution structure of the sulfite reductase flavodoxin-like domain from Escherichia coli.</title>
        <authorList>
            <person name="Sibille N."/>
            <person name="Blackledge M."/>
            <person name="Brutscher B."/>
            <person name="Coves J."/>
            <person name="Bersch B."/>
        </authorList>
    </citation>
    <scope>STRUCTURE BY NMR OF 53-218 IN COMPLEX WITH FMN</scope>
</reference>
<accession>P38038</accession>
<accession>P14782</accession>
<accession>Q2MA65</accession>
<comment type="function">
    <text evidence="1">Component of the sulfite reductase complex that catalyzes the 6-electron reduction of sulfite to sulfide. This is one of several activities required for the biosynthesis of L-cysteine from sulfate. The flavoprotein component catalyzes the electron flow from NADPH -&gt; FAD -&gt; FMN to the hemoprotein component.</text>
</comment>
<comment type="catalytic activity">
    <reaction evidence="1 2">
        <text>hydrogen sulfide + 3 NADP(+) + 3 H2O = sulfite + 3 NADPH + 4 H(+)</text>
        <dbReference type="Rhea" id="RHEA:13801"/>
        <dbReference type="ChEBI" id="CHEBI:15377"/>
        <dbReference type="ChEBI" id="CHEBI:15378"/>
        <dbReference type="ChEBI" id="CHEBI:17359"/>
        <dbReference type="ChEBI" id="CHEBI:29919"/>
        <dbReference type="ChEBI" id="CHEBI:57783"/>
        <dbReference type="ChEBI" id="CHEBI:58349"/>
        <dbReference type="EC" id="1.8.1.2"/>
    </reaction>
</comment>
<comment type="cofactor">
    <cofactor evidence="1 2">
        <name>FAD</name>
        <dbReference type="ChEBI" id="CHEBI:57692"/>
    </cofactor>
    <text evidence="1 2">Binds 1 FAD per subunit.</text>
</comment>
<comment type="cofactor">
    <cofactor evidence="1 2">
        <name>FMN</name>
        <dbReference type="ChEBI" id="CHEBI:58210"/>
    </cofactor>
    <text evidence="1 2">Binds 1 FMN per subunit.</text>
</comment>
<comment type="pathway">
    <text evidence="1">Sulfur metabolism; hydrogen sulfide biosynthesis; hydrogen sulfide from sulfite (NADPH route): step 1/1.</text>
</comment>
<comment type="subunit">
    <text evidence="1 3 4">Alpha(8)-beta(8). The alpha component is a flavoprotein, the beta component is a hemoprotein.</text>
</comment>
<comment type="interaction">
    <interactant intactId="EBI-544440">
        <id>P38038</id>
    </interactant>
    <interactant intactId="EBI-544422">
        <id>P75863</id>
        <label>ycbX</label>
    </interactant>
    <organismsDiffer>false</organismsDiffer>
    <experiments>5</experiments>
</comment>
<comment type="similarity">
    <text evidence="1">Belongs to the NADPH-dependent sulphite reductase flavoprotein subunit CysJ family.</text>
</comment>
<comment type="similarity">
    <text evidence="1">In the N-terminal section; belongs to the flavodoxin family.</text>
</comment>
<comment type="similarity">
    <text evidence="1">In the C-terminal section; belongs to the flavoprotein pyridine nucleotide cytochrome reductase family.</text>
</comment>
<evidence type="ECO:0000255" key="1">
    <source>
        <dbReference type="HAMAP-Rule" id="MF_01541"/>
    </source>
</evidence>
<evidence type="ECO:0000269" key="2">
    <source>
    </source>
</evidence>
<evidence type="ECO:0000269" key="3">
    <source>
    </source>
</evidence>
<evidence type="ECO:0000269" key="4">
    <source>
    </source>
</evidence>
<evidence type="ECO:0000305" key="5"/>
<evidence type="ECO:0007829" key="6">
    <source>
        <dbReference type="PDB" id="1DDG"/>
    </source>
</evidence>
<evidence type="ECO:0007829" key="7">
    <source>
        <dbReference type="PDB" id="1DDI"/>
    </source>
</evidence>
<evidence type="ECO:0007829" key="8">
    <source>
        <dbReference type="PDB" id="1YKG"/>
    </source>
</evidence>
<sequence>MTTQVPPSALLPLNPEQLARLQAATTDLTPTQLAWVSGYFWGVLNQQPAALAATPAPAAEMPGITIISASQTGNARRVAEALRDDLLAAKLNVKLVNAGDYKFKQIASEKLLIVVTSTQGEGEPPEEAVALHKFLFSKKAPKLENTAFAVFSLGDSSYEFFCQSGKDFDSKLAELGGERLLDRVDADVEYQAAASEWRARVVDALKSRAPVAAPSQSVATGAVNEIHTSPYSKDAPLVASLSVNQKITGRNSEKDVRHIEIDLGDSGMRYQPGDALGVWYQNDPALVKELVELLWLKGDEPVTVEGKTLPLNEALQWHFELTVNTANIVENYATLTRSETLLPLVGDKAKLQHYAATTPIVDMVRFSPAQLDAEALINLLRPLTPRLYSIASSQAEVENEVHVTVGVVRYDVEGRARAGGASSFLADRVEEEGEVRVFIEHNDNFRLPANPETPVIMIGPGTGIAPFRAFMQQRAADEAPGKNWLFFGNPHFTEDFLYQVEWQRYVKDGVLTRIDLAWSRDQKEKVYVQDKLREQGAELWRWINDGAHIYVCGDANRMAKDVEQALLEVIAEFGGMDTEAADEFLSELRVERRYQRDVY</sequence>
<dbReference type="EC" id="1.8.1.2" evidence="1 2"/>
<dbReference type="EMBL" id="M23008">
    <property type="protein sequence ID" value="AAA23650.1"/>
    <property type="molecule type" value="Genomic_DNA"/>
</dbReference>
<dbReference type="EMBL" id="U29579">
    <property type="protein sequence ID" value="AAA69274.1"/>
    <property type="molecule type" value="Genomic_DNA"/>
</dbReference>
<dbReference type="EMBL" id="U00096">
    <property type="protein sequence ID" value="AAC75806.1"/>
    <property type="molecule type" value="Genomic_DNA"/>
</dbReference>
<dbReference type="EMBL" id="AP009048">
    <property type="protein sequence ID" value="BAE76841.1"/>
    <property type="molecule type" value="Genomic_DNA"/>
</dbReference>
<dbReference type="PIR" id="H65057">
    <property type="entry name" value="H65057"/>
</dbReference>
<dbReference type="RefSeq" id="NP_417244.1">
    <property type="nucleotide sequence ID" value="NC_000913.3"/>
</dbReference>
<dbReference type="RefSeq" id="WP_000211913.1">
    <property type="nucleotide sequence ID" value="NZ_LN832404.1"/>
</dbReference>
<dbReference type="PDB" id="1DDG">
    <property type="method" value="X-ray"/>
    <property type="resolution" value="2.01 A"/>
    <property type="chains" value="A/B=226-599"/>
</dbReference>
<dbReference type="PDB" id="1DDI">
    <property type="method" value="X-ray"/>
    <property type="resolution" value="2.51 A"/>
    <property type="chains" value="A=226-599"/>
</dbReference>
<dbReference type="PDB" id="1YKG">
    <property type="method" value="NMR"/>
    <property type="chains" value="A=53-219"/>
</dbReference>
<dbReference type="PDBsum" id="1DDG"/>
<dbReference type="PDBsum" id="1DDI"/>
<dbReference type="PDBsum" id="1YKG"/>
<dbReference type="BMRB" id="P38038"/>
<dbReference type="SASBDB" id="P38038"/>
<dbReference type="SMR" id="P38038"/>
<dbReference type="BioGRID" id="4262283">
    <property type="interactions" value="221"/>
</dbReference>
<dbReference type="BioGRID" id="851569">
    <property type="interactions" value="3"/>
</dbReference>
<dbReference type="ComplexPortal" id="CPX-5629">
    <property type="entry name" value="Sulfite reductase [NADPH] complex"/>
</dbReference>
<dbReference type="DIP" id="DIP-9381N"/>
<dbReference type="FunCoup" id="P38038">
    <property type="interactions" value="642"/>
</dbReference>
<dbReference type="IntAct" id="P38038">
    <property type="interactions" value="4"/>
</dbReference>
<dbReference type="STRING" id="511145.b2764"/>
<dbReference type="DrugBank" id="DB03147">
    <property type="generic name" value="Flavin adenine dinucleotide"/>
</dbReference>
<dbReference type="DrugBank" id="DB03461">
    <property type="generic name" value="Nicotinamide adenine dinucleotide phosphate"/>
</dbReference>
<dbReference type="jPOST" id="P38038"/>
<dbReference type="PaxDb" id="511145-b2764"/>
<dbReference type="EnsemblBacteria" id="AAC75806">
    <property type="protein sequence ID" value="AAC75806"/>
    <property type="gene ID" value="b2764"/>
</dbReference>
<dbReference type="GeneID" id="947239"/>
<dbReference type="KEGG" id="ecj:JW2734"/>
<dbReference type="KEGG" id="eco:b2764"/>
<dbReference type="KEGG" id="ecoc:C3026_15190"/>
<dbReference type="PATRIC" id="fig|1411691.4.peg.3973"/>
<dbReference type="EchoBASE" id="EB0188"/>
<dbReference type="eggNOG" id="COG0369">
    <property type="taxonomic scope" value="Bacteria"/>
</dbReference>
<dbReference type="HOGENOM" id="CLU_001570_17_7_6"/>
<dbReference type="InParanoid" id="P38038"/>
<dbReference type="OMA" id="QKRYQRD"/>
<dbReference type="OrthoDB" id="9816402at2"/>
<dbReference type="PhylomeDB" id="P38038"/>
<dbReference type="BioCyc" id="EcoCyc:ALPHACOMP-MONOMER"/>
<dbReference type="BioCyc" id="MetaCyc:ALPHACOMP-MONOMER"/>
<dbReference type="BRENDA" id="1.8.1.2">
    <property type="organism ID" value="2026"/>
</dbReference>
<dbReference type="UniPathway" id="UPA00140">
    <property type="reaction ID" value="UER00207"/>
</dbReference>
<dbReference type="EvolutionaryTrace" id="P38038"/>
<dbReference type="PRO" id="PR:P38038"/>
<dbReference type="Proteomes" id="UP000000625">
    <property type="component" value="Chromosome"/>
</dbReference>
<dbReference type="GO" id="GO:0005829">
    <property type="term" value="C:cytosol"/>
    <property type="evidence" value="ECO:0000318"/>
    <property type="project" value="GO_Central"/>
</dbReference>
<dbReference type="GO" id="GO:0009337">
    <property type="term" value="C:sulfite reductase complex (NADPH)"/>
    <property type="evidence" value="ECO:0000314"/>
    <property type="project" value="EcoCyc"/>
</dbReference>
<dbReference type="GO" id="GO:0050660">
    <property type="term" value="F:flavin adenine dinucleotide binding"/>
    <property type="evidence" value="ECO:0000314"/>
    <property type="project" value="EcoCyc"/>
</dbReference>
<dbReference type="GO" id="GO:0010181">
    <property type="term" value="F:FMN binding"/>
    <property type="evidence" value="ECO:0000314"/>
    <property type="project" value="EcoCyc"/>
</dbReference>
<dbReference type="GO" id="GO:0070401">
    <property type="term" value="F:NADP+ binding"/>
    <property type="evidence" value="ECO:0000315"/>
    <property type="project" value="CAFA"/>
</dbReference>
<dbReference type="GO" id="GO:0016491">
    <property type="term" value="F:oxidoreductase activity"/>
    <property type="evidence" value="ECO:0000318"/>
    <property type="project" value="GO_Central"/>
</dbReference>
<dbReference type="GO" id="GO:0042602">
    <property type="term" value="F:riboflavin reductase (NADPH) activity"/>
    <property type="evidence" value="ECO:0000314"/>
    <property type="project" value="EcoCyc"/>
</dbReference>
<dbReference type="GO" id="GO:0004783">
    <property type="term" value="F:sulfite reductase (NADPH) activity"/>
    <property type="evidence" value="ECO:0007669"/>
    <property type="project" value="UniProtKB-UniRule"/>
</dbReference>
<dbReference type="GO" id="GO:0019344">
    <property type="term" value="P:cysteine biosynthetic process"/>
    <property type="evidence" value="ECO:0000303"/>
    <property type="project" value="ComplexPortal"/>
</dbReference>
<dbReference type="GO" id="GO:0070814">
    <property type="term" value="P:hydrogen sulfide biosynthetic process"/>
    <property type="evidence" value="ECO:0007669"/>
    <property type="project" value="UniProtKB-UniRule"/>
</dbReference>
<dbReference type="GO" id="GO:0000103">
    <property type="term" value="P:sulfate assimilation"/>
    <property type="evidence" value="ECO:0000314"/>
    <property type="project" value="ComplexPortal"/>
</dbReference>
<dbReference type="CDD" id="cd06199">
    <property type="entry name" value="SiR"/>
    <property type="match status" value="1"/>
</dbReference>
<dbReference type="FunFam" id="3.40.50.80:FF:000001">
    <property type="entry name" value="NADPH--cytochrome P450 reductase 1"/>
    <property type="match status" value="1"/>
</dbReference>
<dbReference type="FunFam" id="1.20.990.10:FF:000004">
    <property type="entry name" value="Sulfite reductase [NADPH] flavoprotein alpha-component"/>
    <property type="match status" value="1"/>
</dbReference>
<dbReference type="FunFam" id="3.40.50.360:FF:000018">
    <property type="entry name" value="Sulfite reductase [NADPH] flavoprotein alpha-component"/>
    <property type="match status" value="1"/>
</dbReference>
<dbReference type="Gene3D" id="3.40.50.360">
    <property type="match status" value="1"/>
</dbReference>
<dbReference type="Gene3D" id="1.20.990.10">
    <property type="entry name" value="NADPH-cytochrome p450 Reductase, Chain A, domain 3"/>
    <property type="match status" value="1"/>
</dbReference>
<dbReference type="Gene3D" id="3.40.50.80">
    <property type="entry name" value="Nucleotide-binding domain of ferredoxin-NADP reductase (FNR) module"/>
    <property type="match status" value="1"/>
</dbReference>
<dbReference type="Gene3D" id="2.40.30.10">
    <property type="entry name" value="Translation factors"/>
    <property type="match status" value="1"/>
</dbReference>
<dbReference type="HAMAP" id="MF_01541">
    <property type="entry name" value="CysJ"/>
    <property type="match status" value="1"/>
</dbReference>
<dbReference type="InterPro" id="IPR010199">
    <property type="entry name" value="CysJ"/>
</dbReference>
<dbReference type="InterPro" id="IPR003097">
    <property type="entry name" value="CysJ-like_FAD-binding"/>
</dbReference>
<dbReference type="InterPro" id="IPR029758">
    <property type="entry name" value="CysJ_Proteobact"/>
</dbReference>
<dbReference type="InterPro" id="IPR017927">
    <property type="entry name" value="FAD-bd_FR_type"/>
</dbReference>
<dbReference type="InterPro" id="IPR001094">
    <property type="entry name" value="Flavdoxin-like"/>
</dbReference>
<dbReference type="InterPro" id="IPR008254">
    <property type="entry name" value="Flavodoxin/NO_synth"/>
</dbReference>
<dbReference type="InterPro" id="IPR001709">
    <property type="entry name" value="Flavoprot_Pyr_Nucl_cyt_Rdtase"/>
</dbReference>
<dbReference type="InterPro" id="IPR029039">
    <property type="entry name" value="Flavoprotein-like_sf"/>
</dbReference>
<dbReference type="InterPro" id="IPR039261">
    <property type="entry name" value="FNR_nucleotide-bd"/>
</dbReference>
<dbReference type="InterPro" id="IPR023173">
    <property type="entry name" value="NADPH_Cyt_P450_Rdtase_alpha"/>
</dbReference>
<dbReference type="InterPro" id="IPR001433">
    <property type="entry name" value="OxRdtase_FAD/NAD-bd"/>
</dbReference>
<dbReference type="InterPro" id="IPR017938">
    <property type="entry name" value="Riboflavin_synthase-like_b-brl"/>
</dbReference>
<dbReference type="NCBIfam" id="TIGR01931">
    <property type="entry name" value="cysJ"/>
    <property type="match status" value="1"/>
</dbReference>
<dbReference type="NCBIfam" id="NF004859">
    <property type="entry name" value="PRK06214.1"/>
    <property type="match status" value="1"/>
</dbReference>
<dbReference type="NCBIfam" id="NF008197">
    <property type="entry name" value="PRK10953.1"/>
    <property type="match status" value="1"/>
</dbReference>
<dbReference type="PANTHER" id="PTHR19384:SF128">
    <property type="entry name" value="NADPH OXIDOREDUCTASE A"/>
    <property type="match status" value="1"/>
</dbReference>
<dbReference type="PANTHER" id="PTHR19384">
    <property type="entry name" value="NITRIC OXIDE SYNTHASE-RELATED"/>
    <property type="match status" value="1"/>
</dbReference>
<dbReference type="Pfam" id="PF00667">
    <property type="entry name" value="FAD_binding_1"/>
    <property type="match status" value="1"/>
</dbReference>
<dbReference type="Pfam" id="PF00258">
    <property type="entry name" value="Flavodoxin_1"/>
    <property type="match status" value="1"/>
</dbReference>
<dbReference type="Pfam" id="PF00175">
    <property type="entry name" value="NAD_binding_1"/>
    <property type="match status" value="1"/>
</dbReference>
<dbReference type="PIRSF" id="PIRSF000207">
    <property type="entry name" value="SiR-FP_CysJ"/>
    <property type="match status" value="1"/>
</dbReference>
<dbReference type="PRINTS" id="PR00369">
    <property type="entry name" value="FLAVODOXIN"/>
</dbReference>
<dbReference type="PRINTS" id="PR00371">
    <property type="entry name" value="FPNCR"/>
</dbReference>
<dbReference type="SUPFAM" id="SSF52343">
    <property type="entry name" value="Ferredoxin reductase-like, C-terminal NADP-linked domain"/>
    <property type="match status" value="1"/>
</dbReference>
<dbReference type="SUPFAM" id="SSF52218">
    <property type="entry name" value="Flavoproteins"/>
    <property type="match status" value="1"/>
</dbReference>
<dbReference type="SUPFAM" id="SSF63380">
    <property type="entry name" value="Riboflavin synthase domain-like"/>
    <property type="match status" value="1"/>
</dbReference>
<dbReference type="PROSITE" id="PS51384">
    <property type="entry name" value="FAD_FR"/>
    <property type="match status" value="1"/>
</dbReference>
<dbReference type="PROSITE" id="PS50902">
    <property type="entry name" value="FLAVODOXIN_LIKE"/>
    <property type="match status" value="1"/>
</dbReference>
<organism>
    <name type="scientific">Escherichia coli (strain K12)</name>
    <dbReference type="NCBI Taxonomy" id="83333"/>
    <lineage>
        <taxon>Bacteria</taxon>
        <taxon>Pseudomonadati</taxon>
        <taxon>Pseudomonadota</taxon>
        <taxon>Gammaproteobacteria</taxon>
        <taxon>Enterobacterales</taxon>
        <taxon>Enterobacteriaceae</taxon>
        <taxon>Escherichia</taxon>
    </lineage>
</organism>
<proteinExistence type="evidence at protein level"/>